<gene>
    <name evidence="1" type="primary">mraY</name>
    <name type="ordered locus">Athe_0775</name>
</gene>
<organism>
    <name type="scientific">Caldicellulosiruptor bescii (strain ATCC BAA-1888 / DSM 6725 / KCTC 15123 / Z-1320)</name>
    <name type="common">Anaerocellum thermophilum</name>
    <dbReference type="NCBI Taxonomy" id="521460"/>
    <lineage>
        <taxon>Bacteria</taxon>
        <taxon>Bacillati</taxon>
        <taxon>Bacillota</taxon>
        <taxon>Bacillota incertae sedis</taxon>
        <taxon>Caldicellulosiruptorales</taxon>
        <taxon>Caldicellulosiruptoraceae</taxon>
        <taxon>Caldicellulosiruptor</taxon>
    </lineage>
</organism>
<name>MRAY_CALBD</name>
<evidence type="ECO:0000255" key="1">
    <source>
        <dbReference type="HAMAP-Rule" id="MF_00038"/>
    </source>
</evidence>
<sequence>MLDIDTILAIIISFLIVLIVMPIVIPFLKYLKFGQVVRDDGPKTHHKKSGTPTMGGLVIGLAIIVTSLIFYKKYPAIGAPLIATVAFGLIGFIDDFIKVVLKRSLGLRAREKLVLQFLISITFLYVIQKHLGSDVYLPVINRYIDLKWAYVPVMSVLMVFTVNAVNLTDGLDGLASGVTMIVSLFLAIISIFSKNHDMAIFSGAIVGSCMGFLRYNAHPAVVFMGDTGSLMLGGSIFAIAVMLKQPVLVLVIGGLYIIEAVSVMLQVLYFKLTKKRIFRMAPLHHHFELLGWDEAKVVVVFWIFTILFCLLALAMIQLKI</sequence>
<dbReference type="EC" id="2.7.8.13" evidence="1"/>
<dbReference type="EMBL" id="CP001393">
    <property type="protein sequence ID" value="ACM59890.1"/>
    <property type="molecule type" value="Genomic_DNA"/>
</dbReference>
<dbReference type="RefSeq" id="WP_015907328.1">
    <property type="nucleotide sequence ID" value="NC_012034.1"/>
</dbReference>
<dbReference type="SMR" id="B9MQ98"/>
<dbReference type="STRING" id="521460.Athe_0775"/>
<dbReference type="GeneID" id="31772130"/>
<dbReference type="KEGG" id="ate:Athe_0775"/>
<dbReference type="eggNOG" id="COG0472">
    <property type="taxonomic scope" value="Bacteria"/>
</dbReference>
<dbReference type="HOGENOM" id="CLU_023982_0_1_9"/>
<dbReference type="UniPathway" id="UPA00219"/>
<dbReference type="Proteomes" id="UP000007723">
    <property type="component" value="Chromosome"/>
</dbReference>
<dbReference type="GO" id="GO:0005886">
    <property type="term" value="C:plasma membrane"/>
    <property type="evidence" value="ECO:0007669"/>
    <property type="project" value="UniProtKB-SubCell"/>
</dbReference>
<dbReference type="GO" id="GO:0046872">
    <property type="term" value="F:metal ion binding"/>
    <property type="evidence" value="ECO:0007669"/>
    <property type="project" value="UniProtKB-KW"/>
</dbReference>
<dbReference type="GO" id="GO:0008963">
    <property type="term" value="F:phospho-N-acetylmuramoyl-pentapeptide-transferase activity"/>
    <property type="evidence" value="ECO:0007669"/>
    <property type="project" value="UniProtKB-UniRule"/>
</dbReference>
<dbReference type="GO" id="GO:0051992">
    <property type="term" value="F:UDP-N-acetylmuramoyl-L-alanyl-D-glutamyl-meso-2,6-diaminopimelyl-D-alanyl-D-alanine:undecaprenyl-phosphate transferase activity"/>
    <property type="evidence" value="ECO:0007669"/>
    <property type="project" value="RHEA"/>
</dbReference>
<dbReference type="GO" id="GO:0051301">
    <property type="term" value="P:cell division"/>
    <property type="evidence" value="ECO:0007669"/>
    <property type="project" value="UniProtKB-KW"/>
</dbReference>
<dbReference type="GO" id="GO:0071555">
    <property type="term" value="P:cell wall organization"/>
    <property type="evidence" value="ECO:0007669"/>
    <property type="project" value="UniProtKB-KW"/>
</dbReference>
<dbReference type="GO" id="GO:0009252">
    <property type="term" value="P:peptidoglycan biosynthetic process"/>
    <property type="evidence" value="ECO:0007669"/>
    <property type="project" value="UniProtKB-UniRule"/>
</dbReference>
<dbReference type="GO" id="GO:0008360">
    <property type="term" value="P:regulation of cell shape"/>
    <property type="evidence" value="ECO:0007669"/>
    <property type="project" value="UniProtKB-KW"/>
</dbReference>
<dbReference type="CDD" id="cd06852">
    <property type="entry name" value="GT_MraY"/>
    <property type="match status" value="1"/>
</dbReference>
<dbReference type="HAMAP" id="MF_00038">
    <property type="entry name" value="MraY"/>
    <property type="match status" value="1"/>
</dbReference>
<dbReference type="InterPro" id="IPR000715">
    <property type="entry name" value="Glycosyl_transferase_4"/>
</dbReference>
<dbReference type="InterPro" id="IPR003524">
    <property type="entry name" value="PNAcMuramoyl-5peptid_Trfase"/>
</dbReference>
<dbReference type="InterPro" id="IPR018480">
    <property type="entry name" value="PNAcMuramoyl-5peptid_Trfase_CS"/>
</dbReference>
<dbReference type="NCBIfam" id="TIGR00445">
    <property type="entry name" value="mraY"/>
    <property type="match status" value="1"/>
</dbReference>
<dbReference type="PANTHER" id="PTHR22926">
    <property type="entry name" value="PHOSPHO-N-ACETYLMURAMOYL-PENTAPEPTIDE-TRANSFERASE"/>
    <property type="match status" value="1"/>
</dbReference>
<dbReference type="PANTHER" id="PTHR22926:SF5">
    <property type="entry name" value="PHOSPHO-N-ACETYLMURAMOYL-PENTAPEPTIDE-TRANSFERASE HOMOLOG"/>
    <property type="match status" value="1"/>
</dbReference>
<dbReference type="Pfam" id="PF00953">
    <property type="entry name" value="Glycos_transf_4"/>
    <property type="match status" value="1"/>
</dbReference>
<dbReference type="Pfam" id="PF10555">
    <property type="entry name" value="MraY_sig1"/>
    <property type="match status" value="1"/>
</dbReference>
<dbReference type="PROSITE" id="PS01348">
    <property type="entry name" value="MRAY_2"/>
    <property type="match status" value="1"/>
</dbReference>
<protein>
    <recommendedName>
        <fullName evidence="1">Phospho-N-acetylmuramoyl-pentapeptide-transferase</fullName>
        <ecNumber evidence="1">2.7.8.13</ecNumber>
    </recommendedName>
    <alternativeName>
        <fullName evidence="1">UDP-MurNAc-pentapeptide phosphotransferase</fullName>
    </alternativeName>
</protein>
<keyword id="KW-0131">Cell cycle</keyword>
<keyword id="KW-0132">Cell division</keyword>
<keyword id="KW-1003">Cell membrane</keyword>
<keyword id="KW-0133">Cell shape</keyword>
<keyword id="KW-0961">Cell wall biogenesis/degradation</keyword>
<keyword id="KW-0460">Magnesium</keyword>
<keyword id="KW-0472">Membrane</keyword>
<keyword id="KW-0479">Metal-binding</keyword>
<keyword id="KW-0573">Peptidoglycan synthesis</keyword>
<keyword id="KW-0808">Transferase</keyword>
<keyword id="KW-0812">Transmembrane</keyword>
<keyword id="KW-1133">Transmembrane helix</keyword>
<feature type="chain" id="PRO_1000117158" description="Phospho-N-acetylmuramoyl-pentapeptide-transferase">
    <location>
        <begin position="1"/>
        <end position="320"/>
    </location>
</feature>
<feature type="transmembrane region" description="Helical" evidence="1">
    <location>
        <begin position="7"/>
        <end position="27"/>
    </location>
</feature>
<feature type="transmembrane region" description="Helical" evidence="1">
    <location>
        <begin position="50"/>
        <end position="70"/>
    </location>
</feature>
<feature type="transmembrane region" description="Helical" evidence="1">
    <location>
        <begin position="77"/>
        <end position="97"/>
    </location>
</feature>
<feature type="transmembrane region" description="Helical" evidence="1">
    <location>
        <begin position="113"/>
        <end position="133"/>
    </location>
</feature>
<feature type="transmembrane region" description="Helical" evidence="1">
    <location>
        <begin position="148"/>
        <end position="168"/>
    </location>
</feature>
<feature type="transmembrane region" description="Helical" evidence="1">
    <location>
        <begin position="173"/>
        <end position="193"/>
    </location>
</feature>
<feature type="transmembrane region" description="Helical" evidence="1">
    <location>
        <begin position="198"/>
        <end position="216"/>
    </location>
</feature>
<feature type="transmembrane region" description="Helical" evidence="1">
    <location>
        <begin position="221"/>
        <end position="241"/>
    </location>
</feature>
<feature type="transmembrane region" description="Helical" evidence="1">
    <location>
        <begin position="247"/>
        <end position="267"/>
    </location>
</feature>
<feature type="transmembrane region" description="Helical" evidence="1">
    <location>
        <begin position="297"/>
        <end position="317"/>
    </location>
</feature>
<proteinExistence type="inferred from homology"/>
<comment type="function">
    <text evidence="1">Catalyzes the initial step of the lipid cycle reactions in the biosynthesis of the cell wall peptidoglycan: transfers peptidoglycan precursor phospho-MurNAc-pentapeptide from UDP-MurNAc-pentapeptide onto the lipid carrier undecaprenyl phosphate, yielding undecaprenyl-pyrophosphoryl-MurNAc-pentapeptide, known as lipid I.</text>
</comment>
<comment type="catalytic activity">
    <reaction evidence="1">
        <text>UDP-N-acetyl-alpha-D-muramoyl-L-alanyl-gamma-D-glutamyl-meso-2,6-diaminopimeloyl-D-alanyl-D-alanine + di-trans,octa-cis-undecaprenyl phosphate = di-trans,octa-cis-undecaprenyl diphospho-N-acetyl-alpha-D-muramoyl-L-alanyl-D-glutamyl-meso-2,6-diaminopimeloyl-D-alanyl-D-alanine + UMP</text>
        <dbReference type="Rhea" id="RHEA:28386"/>
        <dbReference type="ChEBI" id="CHEBI:57865"/>
        <dbReference type="ChEBI" id="CHEBI:60392"/>
        <dbReference type="ChEBI" id="CHEBI:61386"/>
        <dbReference type="ChEBI" id="CHEBI:61387"/>
        <dbReference type="EC" id="2.7.8.13"/>
    </reaction>
</comment>
<comment type="cofactor">
    <cofactor evidence="1">
        <name>Mg(2+)</name>
        <dbReference type="ChEBI" id="CHEBI:18420"/>
    </cofactor>
</comment>
<comment type="pathway">
    <text evidence="1">Cell wall biogenesis; peptidoglycan biosynthesis.</text>
</comment>
<comment type="subcellular location">
    <subcellularLocation>
        <location evidence="1">Cell membrane</location>
        <topology evidence="1">Multi-pass membrane protein</topology>
    </subcellularLocation>
</comment>
<comment type="similarity">
    <text evidence="1">Belongs to the glycosyltransferase 4 family. MraY subfamily.</text>
</comment>
<reference key="1">
    <citation type="submission" date="2009-01" db="EMBL/GenBank/DDBJ databases">
        <title>Complete sequence of chromosome of Caldicellulosiruptor becscii DSM 6725.</title>
        <authorList>
            <person name="Lucas S."/>
            <person name="Copeland A."/>
            <person name="Lapidus A."/>
            <person name="Glavina del Rio T."/>
            <person name="Tice H."/>
            <person name="Bruce D."/>
            <person name="Goodwin L."/>
            <person name="Pitluck S."/>
            <person name="Sims D."/>
            <person name="Meincke L."/>
            <person name="Brettin T."/>
            <person name="Detter J.C."/>
            <person name="Han C."/>
            <person name="Larimer F."/>
            <person name="Land M."/>
            <person name="Hauser L."/>
            <person name="Kyrpides N."/>
            <person name="Ovchinnikova G."/>
            <person name="Kataeva I."/>
            <person name="Adams M.W.W."/>
        </authorList>
    </citation>
    <scope>NUCLEOTIDE SEQUENCE [LARGE SCALE GENOMIC DNA]</scope>
    <source>
        <strain>ATCC BAA-1888 / DSM 6725 / KCTC 15123 / Z-1320</strain>
    </source>
</reference>
<accession>B9MQ98</accession>